<comment type="function">
    <text evidence="1">Involved in pre-rRNA and tRNA processing. Utilizes the methyl donor S-adenosyl-L-methionine to catalyze the site-specific 2'-hydroxyl methylation of ribose moieties in rRNA and tRNA. Site specificity is provided by a guide RNA that base pairs with the substrate. Methylation occurs at a characteristic distance from the sequence involved in base pairing with the guide RNA.</text>
</comment>
<comment type="subunit">
    <text evidence="1">Interacts with nop5. Component of box C/D small ribonucleoprotein (sRNP) particles that contain rpl7ae, FlpA and nop5, plus a guide RNA.</text>
</comment>
<comment type="similarity">
    <text evidence="1">Belongs to the methyltransferase superfamily. Fibrillarin family.</text>
</comment>
<name>FLPA_PYRNV</name>
<organism>
    <name type="scientific">Pyrobaculum neutrophilum (strain DSM 2338 / JCM 9278 / NBRC 100436 / V24Sta)</name>
    <name type="common">Thermoproteus neutrophilus</name>
    <dbReference type="NCBI Taxonomy" id="444157"/>
    <lineage>
        <taxon>Archaea</taxon>
        <taxon>Thermoproteota</taxon>
        <taxon>Thermoprotei</taxon>
        <taxon>Thermoproteales</taxon>
        <taxon>Thermoproteaceae</taxon>
        <taxon>Pyrobaculum</taxon>
    </lineage>
</organism>
<proteinExistence type="inferred from homology"/>
<feature type="chain" id="PRO_1000120518" description="Fibrillarin-like rRNA/tRNA 2'-O-methyltransferase">
    <location>
        <begin position="1"/>
        <end position="235"/>
    </location>
</feature>
<feature type="binding site" evidence="1">
    <location>
        <begin position="91"/>
        <end position="92"/>
    </location>
    <ligand>
        <name>S-adenosyl-L-methionine</name>
        <dbReference type="ChEBI" id="CHEBI:59789"/>
    </ligand>
</feature>
<feature type="binding site" evidence="1">
    <location>
        <begin position="110"/>
        <end position="111"/>
    </location>
    <ligand>
        <name>S-adenosyl-L-methionine</name>
        <dbReference type="ChEBI" id="CHEBI:59789"/>
    </ligand>
</feature>
<feature type="binding site" evidence="1">
    <location>
        <begin position="137"/>
        <end position="138"/>
    </location>
    <ligand>
        <name>S-adenosyl-L-methionine</name>
        <dbReference type="ChEBI" id="CHEBI:59789"/>
    </ligand>
</feature>
<feature type="binding site" evidence="1">
    <location>
        <begin position="157"/>
        <end position="160"/>
    </location>
    <ligand>
        <name>S-adenosyl-L-methionine</name>
        <dbReference type="ChEBI" id="CHEBI:59789"/>
    </ligand>
</feature>
<protein>
    <recommendedName>
        <fullName evidence="1">Fibrillarin-like rRNA/tRNA 2'-O-methyltransferase</fullName>
        <ecNumber evidence="1">2.1.1.-</ecNumber>
    </recommendedName>
</protein>
<evidence type="ECO:0000255" key="1">
    <source>
        <dbReference type="HAMAP-Rule" id="MF_00351"/>
    </source>
</evidence>
<dbReference type="EC" id="2.1.1.-" evidence="1"/>
<dbReference type="EMBL" id="CP001014">
    <property type="protein sequence ID" value="ACB40645.1"/>
    <property type="molecule type" value="Genomic_DNA"/>
</dbReference>
<dbReference type="RefSeq" id="WP_012351064.1">
    <property type="nucleotide sequence ID" value="NC_010525.1"/>
</dbReference>
<dbReference type="SMR" id="B1YAJ6"/>
<dbReference type="STRING" id="444157.Tneu_1727"/>
<dbReference type="GeneID" id="6164796"/>
<dbReference type="KEGG" id="tne:Tneu_1727"/>
<dbReference type="eggNOG" id="arCOG00078">
    <property type="taxonomic scope" value="Archaea"/>
</dbReference>
<dbReference type="HOGENOM" id="CLU_059055_2_0_2"/>
<dbReference type="OrthoDB" id="6244at2157"/>
<dbReference type="Proteomes" id="UP000001694">
    <property type="component" value="Chromosome"/>
</dbReference>
<dbReference type="GO" id="GO:1990259">
    <property type="term" value="F:histone H2AQ104 methyltransferase activity"/>
    <property type="evidence" value="ECO:0007669"/>
    <property type="project" value="TreeGrafter"/>
</dbReference>
<dbReference type="GO" id="GO:0003723">
    <property type="term" value="F:RNA binding"/>
    <property type="evidence" value="ECO:0007669"/>
    <property type="project" value="UniProtKB-UniRule"/>
</dbReference>
<dbReference type="GO" id="GO:0008649">
    <property type="term" value="F:rRNA methyltransferase activity"/>
    <property type="evidence" value="ECO:0007669"/>
    <property type="project" value="TreeGrafter"/>
</dbReference>
<dbReference type="GO" id="GO:0000494">
    <property type="term" value="P:box C/D sno(s)RNA 3'-end processing"/>
    <property type="evidence" value="ECO:0007669"/>
    <property type="project" value="TreeGrafter"/>
</dbReference>
<dbReference type="GO" id="GO:0008033">
    <property type="term" value="P:tRNA processing"/>
    <property type="evidence" value="ECO:0007669"/>
    <property type="project" value="UniProtKB-UniRule"/>
</dbReference>
<dbReference type="CDD" id="cd02440">
    <property type="entry name" value="AdoMet_MTases"/>
    <property type="match status" value="1"/>
</dbReference>
<dbReference type="FunFam" id="3.30.200.20:FF:000613">
    <property type="entry name" value="Fibrillarin-like rRNA/tRNA 2'-O-methyltransferase"/>
    <property type="match status" value="1"/>
</dbReference>
<dbReference type="Gene3D" id="3.30.200.20">
    <property type="entry name" value="Phosphorylase Kinase, domain 1"/>
    <property type="match status" value="1"/>
</dbReference>
<dbReference type="Gene3D" id="3.40.50.150">
    <property type="entry name" value="Vaccinia Virus protein VP39"/>
    <property type="match status" value="1"/>
</dbReference>
<dbReference type="HAMAP" id="MF_00351">
    <property type="entry name" value="RNA_methyltransf_FlpA"/>
    <property type="match status" value="1"/>
</dbReference>
<dbReference type="InterPro" id="IPR000692">
    <property type="entry name" value="Fibrillarin"/>
</dbReference>
<dbReference type="InterPro" id="IPR020813">
    <property type="entry name" value="Fibrillarin_CS"/>
</dbReference>
<dbReference type="InterPro" id="IPR029063">
    <property type="entry name" value="SAM-dependent_MTases_sf"/>
</dbReference>
<dbReference type="NCBIfam" id="NF003275">
    <property type="entry name" value="PRK04266.1-1"/>
    <property type="match status" value="1"/>
</dbReference>
<dbReference type="NCBIfam" id="NF003276">
    <property type="entry name" value="PRK04266.1-2"/>
    <property type="match status" value="1"/>
</dbReference>
<dbReference type="NCBIfam" id="NF003277">
    <property type="entry name" value="PRK04266.1-3"/>
    <property type="match status" value="1"/>
</dbReference>
<dbReference type="PANTHER" id="PTHR10335:SF17">
    <property type="entry name" value="FIBRILLARIN"/>
    <property type="match status" value="1"/>
</dbReference>
<dbReference type="PANTHER" id="PTHR10335">
    <property type="entry name" value="RRNA 2-O-METHYLTRANSFERASE FIBRILLARIN"/>
    <property type="match status" value="1"/>
</dbReference>
<dbReference type="Pfam" id="PF01269">
    <property type="entry name" value="Fibrillarin"/>
    <property type="match status" value="1"/>
</dbReference>
<dbReference type="PIRSF" id="PIRSF006540">
    <property type="entry name" value="Nop17p"/>
    <property type="match status" value="1"/>
</dbReference>
<dbReference type="PRINTS" id="PR00052">
    <property type="entry name" value="FIBRILLARIN"/>
</dbReference>
<dbReference type="SMART" id="SM01206">
    <property type="entry name" value="Fibrillarin"/>
    <property type="match status" value="1"/>
</dbReference>
<dbReference type="SUPFAM" id="SSF53335">
    <property type="entry name" value="S-adenosyl-L-methionine-dependent methyltransferases"/>
    <property type="match status" value="1"/>
</dbReference>
<dbReference type="PROSITE" id="PS00566">
    <property type="entry name" value="FIBRILLARIN"/>
    <property type="match status" value="1"/>
</dbReference>
<reference key="1">
    <citation type="submission" date="2008-03" db="EMBL/GenBank/DDBJ databases">
        <title>Complete sequence of Thermoproteus neutrophilus V24Sta.</title>
        <authorList>
            <consortium name="US DOE Joint Genome Institute"/>
            <person name="Copeland A."/>
            <person name="Lucas S."/>
            <person name="Lapidus A."/>
            <person name="Glavina del Rio T."/>
            <person name="Dalin E."/>
            <person name="Tice H."/>
            <person name="Bruce D."/>
            <person name="Goodwin L."/>
            <person name="Pitluck S."/>
            <person name="Sims D."/>
            <person name="Brettin T."/>
            <person name="Detter J.C."/>
            <person name="Han C."/>
            <person name="Kuske C.R."/>
            <person name="Schmutz J."/>
            <person name="Larimer F."/>
            <person name="Land M."/>
            <person name="Hauser L."/>
            <person name="Kyrpides N."/>
            <person name="Mikhailova N."/>
            <person name="Biddle J.F."/>
            <person name="Zhang Z."/>
            <person name="Fitz-Gibbon S.T."/>
            <person name="Lowe T.M."/>
            <person name="Saltikov C."/>
            <person name="House C.H."/>
            <person name="Richardson P."/>
        </authorList>
    </citation>
    <scope>NUCLEOTIDE SEQUENCE [LARGE SCALE GENOMIC DNA]</scope>
    <source>
        <strain>DSM 2338 / JCM 9278 / NBRC 100436 / V24Sta</strain>
    </source>
</reference>
<keyword id="KW-0489">Methyltransferase</keyword>
<keyword id="KW-0694">RNA-binding</keyword>
<keyword id="KW-0698">rRNA processing</keyword>
<keyword id="KW-0808">Transferase</keyword>
<keyword id="KW-0819">tRNA processing</keyword>
<gene>
    <name evidence="1" type="primary">flpA</name>
    <name type="ordered locus">Tneu_1727</name>
</gene>
<accession>B1YAJ6</accession>
<sequence>MSIEVVEVRPHERHFGVYALKFEDGSERLATRNLTPGKRVYGERLVKWGGAEYREWNPYRSKLAAAIANGIKFVPIQEGTHILYLGAASGTTPSHMSDIVGERGLIYSVEFSPRVFREFMEKLVDQGRRNVVPILGDARFPYQYAHYVKGVDVAYIDVAQPAQAKILADNADYFLKPGGYVMLVIKAMSIDVTAPATETFKQEINTLKERGFEILETVHLEPYDTAHAMVVARKR</sequence>